<reference key="1">
    <citation type="journal article" date="2007" name="PLoS ONE">
        <title>Molecular correlates of host specialization in Staphylococcus aureus.</title>
        <authorList>
            <person name="Herron-Olson L."/>
            <person name="Fitzgerald J.R."/>
            <person name="Musser J.M."/>
            <person name="Kapur V."/>
        </authorList>
    </citation>
    <scope>NUCLEOTIDE SEQUENCE [LARGE SCALE GENOMIC DNA]</scope>
    <source>
        <strain>bovine RF122 / ET3-1</strain>
    </source>
</reference>
<proteinExistence type="inferred from homology"/>
<sequence length="378" mass="43433">MTENKSFKESHPLDDFISDKELSNTTIQKEKLTIEQQKQVDTISKQINPLDNEGLLAFGSDLQKQMSQFSHQMLDEVQSKDVGPIGDTLSDLMSKLKSVNPNELNTDKPSMLKRIFSRAKSSINEIFSRMQSVSAQVDRITIQLQKHQTHLTRDIELLDTLYDKNKQYFDDLSLYIIAAQQKKLQLENEKLPQLQQQAQQSTNQMDIQQVADMQQFIDRLDKRIYDLQLSRQIALQTAPQIRMIQNVNQALAEKIQSSILTSIPLWKNQMAIALTLMRQRNAVAAQRAVTDTTNDLLTANAEMLKQNAIETATENERGIVDLDTLKRTQRNIIETIEETLIIQQHGREERQLAEKELQQLEQDLKSHLVNIKGPNKQS</sequence>
<dbReference type="EMBL" id="AJ938182">
    <property type="protein sequence ID" value="CAI80951.1"/>
    <property type="molecule type" value="Genomic_DNA"/>
</dbReference>
<dbReference type="RefSeq" id="WP_000138418.1">
    <property type="nucleotide sequence ID" value="NC_007622.1"/>
</dbReference>
<dbReference type="SMR" id="Q2YY12"/>
<dbReference type="KEGG" id="sab:SAB1262"/>
<dbReference type="HOGENOM" id="CLU_032111_0_0_9"/>
<dbReference type="InterPro" id="IPR008863">
    <property type="entry name" value="Toxic_anion-R_TelA"/>
</dbReference>
<dbReference type="PANTHER" id="PTHR38432">
    <property type="entry name" value="TELA-LIKE PROTEIN SAOUHSC_01408"/>
    <property type="match status" value="1"/>
</dbReference>
<dbReference type="PANTHER" id="PTHR38432:SF1">
    <property type="entry name" value="TELA-LIKE PROTEIN SAOUHSC_01408"/>
    <property type="match status" value="1"/>
</dbReference>
<dbReference type="Pfam" id="PF05816">
    <property type="entry name" value="TelA"/>
    <property type="match status" value="1"/>
</dbReference>
<dbReference type="PIRSF" id="PIRSF026508">
    <property type="entry name" value="TelA"/>
    <property type="match status" value="1"/>
</dbReference>
<comment type="similarity">
    <text evidence="1">Belongs to the TelA family.</text>
</comment>
<gene>
    <name type="ordered locus">SAB1262</name>
</gene>
<evidence type="ECO:0000305" key="1"/>
<name>TELL_STAAB</name>
<accession>Q2YY12</accession>
<protein>
    <recommendedName>
        <fullName>TelA-like protein SAB1262</fullName>
    </recommendedName>
</protein>
<organism>
    <name type="scientific">Staphylococcus aureus (strain bovine RF122 / ET3-1)</name>
    <dbReference type="NCBI Taxonomy" id="273036"/>
    <lineage>
        <taxon>Bacteria</taxon>
        <taxon>Bacillati</taxon>
        <taxon>Bacillota</taxon>
        <taxon>Bacilli</taxon>
        <taxon>Bacillales</taxon>
        <taxon>Staphylococcaceae</taxon>
        <taxon>Staphylococcus</taxon>
    </lineage>
</organism>
<feature type="chain" id="PRO_0000281402" description="TelA-like protein SAB1262">
    <location>
        <begin position="1"/>
        <end position="378"/>
    </location>
</feature>